<proteinExistence type="inferred from homology"/>
<organism>
    <name type="scientific">Sinorhizobium fredii (strain NBRC 101917 / NGR234)</name>
    <dbReference type="NCBI Taxonomy" id="394"/>
    <lineage>
        <taxon>Bacteria</taxon>
        <taxon>Pseudomonadati</taxon>
        <taxon>Pseudomonadota</taxon>
        <taxon>Alphaproteobacteria</taxon>
        <taxon>Hyphomicrobiales</taxon>
        <taxon>Rhizobiaceae</taxon>
        <taxon>Sinorhizobium/Ensifer group</taxon>
        <taxon>Sinorhizobium</taxon>
    </lineage>
</organism>
<name>Y4RD_SINFN</name>
<protein>
    <recommendedName>
        <fullName>Putative integrase/recombinase y4rD</fullName>
    </recommendedName>
</protein>
<feature type="chain" id="PRO_0000197580" description="Putative integrase/recombinase y4rD">
    <location>
        <begin position="1"/>
        <end position="281"/>
    </location>
</feature>
<feature type="domain" description="Core-binding (CB)" evidence="2">
    <location>
        <begin position="5"/>
        <end position="98"/>
    </location>
</feature>
<feature type="domain" description="Tyr recombinase" evidence="1">
    <location>
        <begin position="122"/>
        <end position="281"/>
    </location>
</feature>
<feature type="active site" evidence="1">
    <location>
        <position position="162"/>
    </location>
</feature>
<feature type="active site" evidence="1">
    <location>
        <position position="188"/>
    </location>
</feature>
<feature type="active site" evidence="1">
    <location>
        <position position="262"/>
    </location>
</feature>
<feature type="active site" evidence="1">
    <location>
        <position position="265"/>
    </location>
</feature>
<keyword id="KW-0229">DNA integration</keyword>
<keyword id="KW-0233">DNA recombination</keyword>
<keyword id="KW-0238">DNA-binding</keyword>
<keyword id="KW-0614">Plasmid</keyword>
<keyword id="KW-1185">Reference proteome</keyword>
<keyword id="KW-0814">Transposable element</keyword>
<keyword id="KW-1179">Viral genome integration</keyword>
<keyword id="KW-1160">Virus entry into host cell</keyword>
<reference key="1">
    <citation type="journal article" date="1997" name="Nature">
        <title>Molecular basis of symbiosis between Rhizobium and legumes.</title>
        <authorList>
            <person name="Freiberg C.A."/>
            <person name="Fellay R."/>
            <person name="Bairoch A."/>
            <person name="Broughton W.J."/>
            <person name="Rosenthal A."/>
            <person name="Perret X."/>
        </authorList>
    </citation>
    <scope>NUCLEOTIDE SEQUENCE [LARGE SCALE GENOMIC DNA]</scope>
    <source>
        <strain>NBRC 101917 / NGR234</strain>
    </source>
</reference>
<reference key="2">
    <citation type="journal article" date="2009" name="Appl. Environ. Microbiol.">
        <title>Rhizobium sp. strain NGR234 possesses a remarkable number of secretion systems.</title>
        <authorList>
            <person name="Schmeisser C."/>
            <person name="Liesegang H."/>
            <person name="Krysciak D."/>
            <person name="Bakkou N."/>
            <person name="Le Quere A."/>
            <person name="Wollherr A."/>
            <person name="Heinemeyer I."/>
            <person name="Morgenstern B."/>
            <person name="Pommerening-Roeser A."/>
            <person name="Flores M."/>
            <person name="Palacios R."/>
            <person name="Brenner S."/>
            <person name="Gottschalk G."/>
            <person name="Schmitz R.A."/>
            <person name="Broughton W.J."/>
            <person name="Perret X."/>
            <person name="Strittmatter A.W."/>
            <person name="Streit W.R."/>
        </authorList>
    </citation>
    <scope>NUCLEOTIDE SEQUENCE [LARGE SCALE GENOMIC DNA]</scope>
    <source>
        <strain>NBRC 101917 / NGR234</strain>
    </source>
</reference>
<evidence type="ECO:0000255" key="1">
    <source>
        <dbReference type="PROSITE-ProRule" id="PRU01246"/>
    </source>
</evidence>
<evidence type="ECO:0000255" key="2">
    <source>
        <dbReference type="PROSITE-ProRule" id="PRU01248"/>
    </source>
</evidence>
<evidence type="ECO:0000305" key="3"/>
<comment type="function">
    <text>Seems to be non-functional.</text>
</comment>
<comment type="similarity">
    <text evidence="3">Belongs to the 'phage' integrase family.</text>
</comment>
<accession>P55637</accession>
<dbReference type="EMBL" id="U00090">
    <property type="protein sequence ID" value="AAB92470.1"/>
    <property type="molecule type" value="Genomic_DNA"/>
</dbReference>
<dbReference type="RefSeq" id="NP_444042.1">
    <property type="nucleotide sequence ID" value="NC_000914.2"/>
</dbReference>
<dbReference type="RefSeq" id="WP_010875217.1">
    <property type="nucleotide sequence ID" value="NC_000914.2"/>
</dbReference>
<dbReference type="SMR" id="P55637"/>
<dbReference type="KEGG" id="rhi:NGR_a01830"/>
<dbReference type="PATRIC" id="fig|394.7.peg.181"/>
<dbReference type="eggNOG" id="COG0582">
    <property type="taxonomic scope" value="Bacteria"/>
</dbReference>
<dbReference type="HOGENOM" id="CLU_027562_9_1_5"/>
<dbReference type="OrthoDB" id="9801717at2"/>
<dbReference type="Proteomes" id="UP000001054">
    <property type="component" value="Plasmid pNGR234a"/>
</dbReference>
<dbReference type="GO" id="GO:0003677">
    <property type="term" value="F:DNA binding"/>
    <property type="evidence" value="ECO:0007669"/>
    <property type="project" value="UniProtKB-KW"/>
</dbReference>
<dbReference type="GO" id="GO:0015074">
    <property type="term" value="P:DNA integration"/>
    <property type="evidence" value="ECO:0007669"/>
    <property type="project" value="UniProtKB-KW"/>
</dbReference>
<dbReference type="GO" id="GO:0006310">
    <property type="term" value="P:DNA recombination"/>
    <property type="evidence" value="ECO:0007669"/>
    <property type="project" value="UniProtKB-KW"/>
</dbReference>
<dbReference type="GO" id="GO:0075713">
    <property type="term" value="P:establishment of integrated proviral latency"/>
    <property type="evidence" value="ECO:0007669"/>
    <property type="project" value="UniProtKB-KW"/>
</dbReference>
<dbReference type="GO" id="GO:0046718">
    <property type="term" value="P:symbiont entry into host cell"/>
    <property type="evidence" value="ECO:0007669"/>
    <property type="project" value="UniProtKB-KW"/>
</dbReference>
<dbReference type="GO" id="GO:0044826">
    <property type="term" value="P:viral genome integration into host DNA"/>
    <property type="evidence" value="ECO:0007669"/>
    <property type="project" value="UniProtKB-KW"/>
</dbReference>
<dbReference type="Gene3D" id="1.10.150.130">
    <property type="match status" value="1"/>
</dbReference>
<dbReference type="Gene3D" id="1.10.443.10">
    <property type="entry name" value="Intergrase catalytic core"/>
    <property type="match status" value="1"/>
</dbReference>
<dbReference type="InterPro" id="IPR044068">
    <property type="entry name" value="CB"/>
</dbReference>
<dbReference type="InterPro" id="IPR011010">
    <property type="entry name" value="DNA_brk_join_enz"/>
</dbReference>
<dbReference type="InterPro" id="IPR013762">
    <property type="entry name" value="Integrase-like_cat_sf"/>
</dbReference>
<dbReference type="InterPro" id="IPR002104">
    <property type="entry name" value="Integrase_catalytic"/>
</dbReference>
<dbReference type="InterPro" id="IPR010998">
    <property type="entry name" value="Integrase_recombinase_N"/>
</dbReference>
<dbReference type="InterPro" id="IPR004107">
    <property type="entry name" value="Integrase_SAM-like_N"/>
</dbReference>
<dbReference type="InterPro" id="IPR050090">
    <property type="entry name" value="Tyrosine_recombinase_XerCD"/>
</dbReference>
<dbReference type="PANTHER" id="PTHR30349">
    <property type="entry name" value="PHAGE INTEGRASE-RELATED"/>
    <property type="match status" value="1"/>
</dbReference>
<dbReference type="PANTHER" id="PTHR30349:SF64">
    <property type="entry name" value="PROPHAGE INTEGRASE INTD-RELATED"/>
    <property type="match status" value="1"/>
</dbReference>
<dbReference type="Pfam" id="PF02899">
    <property type="entry name" value="Phage_int_SAM_1"/>
    <property type="match status" value="1"/>
</dbReference>
<dbReference type="Pfam" id="PF00589">
    <property type="entry name" value="Phage_integrase"/>
    <property type="match status" value="1"/>
</dbReference>
<dbReference type="SUPFAM" id="SSF56349">
    <property type="entry name" value="DNA breaking-rejoining enzymes"/>
    <property type="match status" value="1"/>
</dbReference>
<dbReference type="PROSITE" id="PS51900">
    <property type="entry name" value="CB"/>
    <property type="match status" value="1"/>
</dbReference>
<dbReference type="PROSITE" id="PS51898">
    <property type="entry name" value="TYR_RECOMBINASE"/>
    <property type="match status" value="1"/>
</dbReference>
<gene>
    <name type="ordered locus">NGR_a01830</name>
    <name type="ORF">y4rD</name>
</gene>
<sequence>MSEHLLLAPLLESYFRRRLTKQRNATPATMASYRDALRMLILFAATRLRKKPAALVLEELDRDLILAFLDELEEKRNNTIATRNARLAAIRSFFHHVAAADPASFGVAQRVLTIPIKRAHIEVTHHLTKAEVDALIEAPNPRTPRGRRDRTFLLFLARTGARVSEATGVNANDLQLERSHPQVLLRGKGRRDRVIPIPQDLARALTALLAEHGIANHEPRPIFVGARNERLTRFGATHIVRRAVAQAVTIRPTLAQKPISPHIFRHYLPHPTMSGTENASV</sequence>
<geneLocation type="plasmid">
    <name>sym pNGR234a</name>
</geneLocation>